<feature type="chain" id="PRO_0000333466" description="Type 1 phosphatases regulator ypi1">
    <location>
        <begin position="1"/>
        <end position="172"/>
    </location>
</feature>
<feature type="region of interest" description="Disordered" evidence="2">
    <location>
        <begin position="1"/>
        <end position="53"/>
    </location>
</feature>
<feature type="region of interest" description="Disordered" evidence="2">
    <location>
        <begin position="83"/>
        <end position="172"/>
    </location>
</feature>
<feature type="compositionally biased region" description="Polar residues" evidence="2">
    <location>
        <begin position="1"/>
        <end position="32"/>
    </location>
</feature>
<feature type="compositionally biased region" description="Acidic residues" evidence="2">
    <location>
        <begin position="91"/>
        <end position="107"/>
    </location>
</feature>
<feature type="compositionally biased region" description="Basic and acidic residues" evidence="2">
    <location>
        <begin position="108"/>
        <end position="119"/>
    </location>
</feature>
<feature type="compositionally biased region" description="Basic residues" evidence="2">
    <location>
        <begin position="142"/>
        <end position="154"/>
    </location>
</feature>
<evidence type="ECO:0000250" key="1"/>
<evidence type="ECO:0000256" key="2">
    <source>
        <dbReference type="SAM" id="MobiDB-lite"/>
    </source>
</evidence>
<evidence type="ECO:0000305" key="3"/>
<sequence>MSRTQQAPMNAGSASGVQVASPLSQDNSTIRVSGTLRLRGDNGTRNNGEDLTTTRHIRWSEDVVDNEGMGKKSSKVCCIYHKDRPVGESSSESDDTDSSSDDCSDCDSDTRIPTHKGDQGGEASSRCSPSRLAERKCGTSCSKRHSKQRSRRHMSPNAYEKMPKFKGQPGKR</sequence>
<gene>
    <name type="primary">ypi1</name>
    <name type="ORF">ACLA_026790</name>
</gene>
<accession>A1CQN6</accession>
<name>YPI1_ASPCL</name>
<dbReference type="EMBL" id="DS027059">
    <property type="protein sequence ID" value="EAW07957.1"/>
    <property type="molecule type" value="Genomic_DNA"/>
</dbReference>
<dbReference type="RefSeq" id="XP_001269383.1">
    <property type="nucleotide sequence ID" value="XM_001269382.1"/>
</dbReference>
<dbReference type="SMR" id="A1CQN6"/>
<dbReference type="STRING" id="344612.A1CQN6"/>
<dbReference type="EnsemblFungi" id="EAW07957">
    <property type="protein sequence ID" value="EAW07957"/>
    <property type="gene ID" value="ACLA_026790"/>
</dbReference>
<dbReference type="GeneID" id="4701549"/>
<dbReference type="KEGG" id="act:ACLA_026790"/>
<dbReference type="VEuPathDB" id="FungiDB:ACLA_026790"/>
<dbReference type="eggNOG" id="KOG4102">
    <property type="taxonomic scope" value="Eukaryota"/>
</dbReference>
<dbReference type="HOGENOM" id="CLU_098333_0_0_1"/>
<dbReference type="OMA" id="RRHIQWA"/>
<dbReference type="OrthoDB" id="307488at2759"/>
<dbReference type="Proteomes" id="UP000006701">
    <property type="component" value="Unassembled WGS sequence"/>
</dbReference>
<dbReference type="GO" id="GO:0005634">
    <property type="term" value="C:nucleus"/>
    <property type="evidence" value="ECO:0007669"/>
    <property type="project" value="UniProtKB-SubCell"/>
</dbReference>
<dbReference type="GO" id="GO:0008157">
    <property type="term" value="F:protein phosphatase 1 binding"/>
    <property type="evidence" value="ECO:0007669"/>
    <property type="project" value="TreeGrafter"/>
</dbReference>
<dbReference type="GO" id="GO:0004865">
    <property type="term" value="F:protein serine/threonine phosphatase inhibitor activity"/>
    <property type="evidence" value="ECO:0007669"/>
    <property type="project" value="InterPro"/>
</dbReference>
<dbReference type="InterPro" id="IPR011107">
    <property type="entry name" value="PPI_Ypi1"/>
</dbReference>
<dbReference type="PANTHER" id="PTHR20835:SF0">
    <property type="entry name" value="E3 UBIQUITIN-PROTEIN LIGASE PPP1R11"/>
    <property type="match status" value="1"/>
</dbReference>
<dbReference type="PANTHER" id="PTHR20835">
    <property type="entry name" value="E3 UBIQUITIN-PROTEIN LIGASE PPP1R11-RELATED"/>
    <property type="match status" value="1"/>
</dbReference>
<dbReference type="Pfam" id="PF07491">
    <property type="entry name" value="PPI_Ypi1"/>
    <property type="match status" value="1"/>
</dbReference>
<organism>
    <name type="scientific">Aspergillus clavatus (strain ATCC 1007 / CBS 513.65 / DSM 816 / NCTC 3887 / NRRL 1 / QM 1276 / 107)</name>
    <dbReference type="NCBI Taxonomy" id="344612"/>
    <lineage>
        <taxon>Eukaryota</taxon>
        <taxon>Fungi</taxon>
        <taxon>Dikarya</taxon>
        <taxon>Ascomycota</taxon>
        <taxon>Pezizomycotina</taxon>
        <taxon>Eurotiomycetes</taxon>
        <taxon>Eurotiomycetidae</taxon>
        <taxon>Eurotiales</taxon>
        <taxon>Aspergillaceae</taxon>
        <taxon>Aspergillus</taxon>
        <taxon>Aspergillus subgen. Fumigati</taxon>
    </lineage>
</organism>
<reference key="1">
    <citation type="journal article" date="2008" name="PLoS Genet.">
        <title>Genomic islands in the pathogenic filamentous fungus Aspergillus fumigatus.</title>
        <authorList>
            <person name="Fedorova N.D."/>
            <person name="Khaldi N."/>
            <person name="Joardar V.S."/>
            <person name="Maiti R."/>
            <person name="Amedeo P."/>
            <person name="Anderson M.J."/>
            <person name="Crabtree J."/>
            <person name="Silva J.C."/>
            <person name="Badger J.H."/>
            <person name="Albarraq A."/>
            <person name="Angiuoli S."/>
            <person name="Bussey H."/>
            <person name="Bowyer P."/>
            <person name="Cotty P.J."/>
            <person name="Dyer P.S."/>
            <person name="Egan A."/>
            <person name="Galens K."/>
            <person name="Fraser-Liggett C.M."/>
            <person name="Haas B.J."/>
            <person name="Inman J.M."/>
            <person name="Kent R."/>
            <person name="Lemieux S."/>
            <person name="Malavazi I."/>
            <person name="Orvis J."/>
            <person name="Roemer T."/>
            <person name="Ronning C.M."/>
            <person name="Sundaram J.P."/>
            <person name="Sutton G."/>
            <person name="Turner G."/>
            <person name="Venter J.C."/>
            <person name="White O.R."/>
            <person name="Whitty B.R."/>
            <person name="Youngman P."/>
            <person name="Wolfe K.H."/>
            <person name="Goldman G.H."/>
            <person name="Wortman J.R."/>
            <person name="Jiang B."/>
            <person name="Denning D.W."/>
            <person name="Nierman W.C."/>
        </authorList>
    </citation>
    <scope>NUCLEOTIDE SEQUENCE [LARGE SCALE GENOMIC DNA]</scope>
    <source>
        <strain>ATCC 1007 / CBS 513.65 / DSM 816 / NCTC 3887 / NRRL 1 / QM 1276 / 107</strain>
    </source>
</reference>
<protein>
    <recommendedName>
        <fullName>Type 1 phosphatases regulator ypi1</fullName>
    </recommendedName>
</protein>
<comment type="function">
    <text evidence="1">Regulator of type 1 phosphatases which maintains protein phosphatase activity under strict control.</text>
</comment>
<comment type="subcellular location">
    <subcellularLocation>
        <location evidence="1">Nucleus</location>
    </subcellularLocation>
</comment>
<comment type="similarity">
    <text evidence="3">Belongs to the YPI1 family.</text>
</comment>
<keyword id="KW-0539">Nucleus</keyword>
<keyword id="KW-1185">Reference proteome</keyword>
<proteinExistence type="inferred from homology"/>